<reference key="1">
    <citation type="journal article" date="2008" name="Appl. Environ. Microbiol.">
        <title>Genome of the epsilonproteobacterial chemolithoautotroph Sulfurimonas denitrificans.</title>
        <authorList>
            <person name="Sievert S.M."/>
            <person name="Scott K.M."/>
            <person name="Klotz M.G."/>
            <person name="Chain P.S.G."/>
            <person name="Hauser L.J."/>
            <person name="Hemp J."/>
            <person name="Huegler M."/>
            <person name="Land M."/>
            <person name="Lapidus A."/>
            <person name="Larimer F.W."/>
            <person name="Lucas S."/>
            <person name="Malfatti S.A."/>
            <person name="Meyer F."/>
            <person name="Paulsen I.T."/>
            <person name="Ren Q."/>
            <person name="Simon J."/>
            <person name="Bailey K."/>
            <person name="Diaz E."/>
            <person name="Fitzpatrick K.A."/>
            <person name="Glover B."/>
            <person name="Gwatney N."/>
            <person name="Korajkic A."/>
            <person name="Long A."/>
            <person name="Mobberley J.M."/>
            <person name="Pantry S.N."/>
            <person name="Pazder G."/>
            <person name="Peterson S."/>
            <person name="Quintanilla J.D."/>
            <person name="Sprinkle R."/>
            <person name="Stephens J."/>
            <person name="Thomas P."/>
            <person name="Vaughn R."/>
            <person name="Weber M.J."/>
            <person name="Wooten L.L."/>
        </authorList>
    </citation>
    <scope>NUCLEOTIDE SEQUENCE [LARGE SCALE GENOMIC DNA]</scope>
    <source>
        <strain>ATCC 33889 / DSM 1251</strain>
    </source>
</reference>
<keyword id="KW-0328">Glycosyltransferase</keyword>
<keyword id="KW-0479">Metal-binding</keyword>
<keyword id="KW-0671">Queuosine biosynthesis</keyword>
<keyword id="KW-1185">Reference proteome</keyword>
<keyword id="KW-0808">Transferase</keyword>
<keyword id="KW-0819">tRNA processing</keyword>
<keyword id="KW-0862">Zinc</keyword>
<name>TGT_SULDN</name>
<accession>Q30S46</accession>
<comment type="function">
    <text evidence="1">Catalyzes the base-exchange of a guanine (G) residue with the queuine precursor 7-aminomethyl-7-deazaguanine (PreQ1) at position 34 (anticodon wobble position) in tRNAs with GU(N) anticodons (tRNA-Asp, -Asn, -His and -Tyr). Catalysis occurs through a double-displacement mechanism. The nucleophile active site attacks the C1' of nucleotide 34 to detach the guanine base from the RNA, forming a covalent enzyme-RNA intermediate. The proton acceptor active site deprotonates the incoming PreQ1, allowing a nucleophilic attack on the C1' of the ribose to form the product. After dissociation, two additional enzymatic reactions on the tRNA convert PreQ1 to queuine (Q), resulting in the hypermodified nucleoside queuosine (7-(((4,5-cis-dihydroxy-2-cyclopenten-1-yl)amino)methyl)-7-deazaguanosine).</text>
</comment>
<comment type="catalytic activity">
    <reaction evidence="1">
        <text>7-aminomethyl-7-carbaguanine + guanosine(34) in tRNA = 7-aminomethyl-7-carbaguanosine(34) in tRNA + guanine</text>
        <dbReference type="Rhea" id="RHEA:24104"/>
        <dbReference type="Rhea" id="RHEA-COMP:10341"/>
        <dbReference type="Rhea" id="RHEA-COMP:10342"/>
        <dbReference type="ChEBI" id="CHEBI:16235"/>
        <dbReference type="ChEBI" id="CHEBI:58703"/>
        <dbReference type="ChEBI" id="CHEBI:74269"/>
        <dbReference type="ChEBI" id="CHEBI:82833"/>
        <dbReference type="EC" id="2.4.2.29"/>
    </reaction>
</comment>
<comment type="cofactor">
    <cofactor evidence="1">
        <name>Zn(2+)</name>
        <dbReference type="ChEBI" id="CHEBI:29105"/>
    </cofactor>
    <text evidence="1">Binds 1 zinc ion per subunit.</text>
</comment>
<comment type="pathway">
    <text evidence="1">tRNA modification; tRNA-queuosine biosynthesis.</text>
</comment>
<comment type="subunit">
    <text evidence="1">Homodimer. Within each dimer, one monomer is responsible for RNA recognition and catalysis, while the other monomer binds to the replacement base PreQ1.</text>
</comment>
<comment type="similarity">
    <text evidence="1">Belongs to the queuine tRNA-ribosyltransferase family.</text>
</comment>
<protein>
    <recommendedName>
        <fullName evidence="1">Queuine tRNA-ribosyltransferase</fullName>
        <ecNumber evidence="1">2.4.2.29</ecNumber>
    </recommendedName>
    <alternativeName>
        <fullName evidence="1">Guanine insertion enzyme</fullName>
    </alternativeName>
    <alternativeName>
        <fullName evidence="1">tRNA-guanine transglycosylase</fullName>
    </alternativeName>
</protein>
<sequence>MEFTLEATSKNARACTIKTAHSTIKTPVFMPVGTLGSVKALDMEDVLDLLGAEIILANTYHMYLRPGDETVAKMGKLHGFTTYPKSFLTDSGGFQAFSLSDISKASENGIEFRSHIDGSKHFFTPKKVIDIQHNLGSDIMMILDDLVALPATGERIALSIERTTAWAKESIEYFRKKQKEGIGAEQNIFAIIQGGTDKAFRTKSATELCALDFDGFAIGGLSVGELNNEMYDTVEHTVKYMPKDKPRYLMGVGTPEDLIENIERGIDMFDCVMPTRNARNGTLFTSFGRLNIKGATYKEDAQPVDSECECLTCKRYSRAYLNHLFRSREIAYFRLATIHNLHYYLNLMREAREAILEDKYAEFKAEFYRKRG</sequence>
<dbReference type="EC" id="2.4.2.29" evidence="1"/>
<dbReference type="EMBL" id="CP000153">
    <property type="protein sequence ID" value="ABB44185.1"/>
    <property type="molecule type" value="Genomic_DNA"/>
</dbReference>
<dbReference type="RefSeq" id="WP_011372537.1">
    <property type="nucleotide sequence ID" value="NC_007575.1"/>
</dbReference>
<dbReference type="SMR" id="Q30S46"/>
<dbReference type="STRING" id="326298.Suden_0907"/>
<dbReference type="KEGG" id="tdn:Suden_0907"/>
<dbReference type="eggNOG" id="COG0343">
    <property type="taxonomic scope" value="Bacteria"/>
</dbReference>
<dbReference type="HOGENOM" id="CLU_022060_0_1_7"/>
<dbReference type="OrthoDB" id="9805417at2"/>
<dbReference type="UniPathway" id="UPA00392"/>
<dbReference type="Proteomes" id="UP000002714">
    <property type="component" value="Chromosome"/>
</dbReference>
<dbReference type="GO" id="GO:0005829">
    <property type="term" value="C:cytosol"/>
    <property type="evidence" value="ECO:0007669"/>
    <property type="project" value="TreeGrafter"/>
</dbReference>
<dbReference type="GO" id="GO:0046872">
    <property type="term" value="F:metal ion binding"/>
    <property type="evidence" value="ECO:0007669"/>
    <property type="project" value="UniProtKB-KW"/>
</dbReference>
<dbReference type="GO" id="GO:0008479">
    <property type="term" value="F:tRNA-guanosine(34) queuine transglycosylase activity"/>
    <property type="evidence" value="ECO:0007669"/>
    <property type="project" value="UniProtKB-UniRule"/>
</dbReference>
<dbReference type="GO" id="GO:0008616">
    <property type="term" value="P:queuosine biosynthetic process"/>
    <property type="evidence" value="ECO:0007669"/>
    <property type="project" value="UniProtKB-UniRule"/>
</dbReference>
<dbReference type="GO" id="GO:0101030">
    <property type="term" value="P:tRNA-guanine transglycosylation"/>
    <property type="evidence" value="ECO:0007669"/>
    <property type="project" value="InterPro"/>
</dbReference>
<dbReference type="FunFam" id="3.20.20.105:FF:000001">
    <property type="entry name" value="Queuine tRNA-ribosyltransferase"/>
    <property type="match status" value="1"/>
</dbReference>
<dbReference type="Gene3D" id="3.20.20.105">
    <property type="entry name" value="Queuine tRNA-ribosyltransferase-like"/>
    <property type="match status" value="1"/>
</dbReference>
<dbReference type="HAMAP" id="MF_00168">
    <property type="entry name" value="Q_tRNA_Tgt"/>
    <property type="match status" value="1"/>
</dbReference>
<dbReference type="InterPro" id="IPR004803">
    <property type="entry name" value="TGT"/>
</dbReference>
<dbReference type="InterPro" id="IPR036511">
    <property type="entry name" value="TGT-like_sf"/>
</dbReference>
<dbReference type="InterPro" id="IPR002616">
    <property type="entry name" value="tRNA_ribo_trans-like"/>
</dbReference>
<dbReference type="NCBIfam" id="TIGR00430">
    <property type="entry name" value="Q_tRNA_tgt"/>
    <property type="match status" value="1"/>
</dbReference>
<dbReference type="NCBIfam" id="TIGR00449">
    <property type="entry name" value="tgt_general"/>
    <property type="match status" value="1"/>
</dbReference>
<dbReference type="PANTHER" id="PTHR43530">
    <property type="entry name" value="QUEUINE TRNA-RIBOSYLTRANSFERASE CATALYTIC SUBUNIT 1"/>
    <property type="match status" value="1"/>
</dbReference>
<dbReference type="PANTHER" id="PTHR43530:SF1">
    <property type="entry name" value="QUEUINE TRNA-RIBOSYLTRANSFERASE CATALYTIC SUBUNIT 1"/>
    <property type="match status" value="1"/>
</dbReference>
<dbReference type="Pfam" id="PF01702">
    <property type="entry name" value="TGT"/>
    <property type="match status" value="1"/>
</dbReference>
<dbReference type="SUPFAM" id="SSF51713">
    <property type="entry name" value="tRNA-guanine transglycosylase"/>
    <property type="match status" value="1"/>
</dbReference>
<proteinExistence type="inferred from homology"/>
<organism>
    <name type="scientific">Sulfurimonas denitrificans (strain ATCC 33889 / DSM 1251)</name>
    <name type="common">Thiomicrospira denitrificans (strain ATCC 33889 / DSM 1251)</name>
    <dbReference type="NCBI Taxonomy" id="326298"/>
    <lineage>
        <taxon>Bacteria</taxon>
        <taxon>Pseudomonadati</taxon>
        <taxon>Campylobacterota</taxon>
        <taxon>Epsilonproteobacteria</taxon>
        <taxon>Campylobacterales</taxon>
        <taxon>Sulfurimonadaceae</taxon>
        <taxon>Sulfurimonas</taxon>
    </lineage>
</organism>
<feature type="chain" id="PRO_1000016886" description="Queuine tRNA-ribosyltransferase">
    <location>
        <begin position="1"/>
        <end position="372"/>
    </location>
</feature>
<feature type="region of interest" description="RNA binding" evidence="1">
    <location>
        <begin position="251"/>
        <end position="257"/>
    </location>
</feature>
<feature type="region of interest" description="RNA binding; important for wobble base 34 recognition" evidence="1">
    <location>
        <begin position="275"/>
        <end position="279"/>
    </location>
</feature>
<feature type="active site" description="Proton acceptor" evidence="1">
    <location>
        <position position="90"/>
    </location>
</feature>
<feature type="active site" description="Nucleophile" evidence="1">
    <location>
        <position position="270"/>
    </location>
</feature>
<feature type="binding site" evidence="1">
    <location>
        <begin position="90"/>
        <end position="94"/>
    </location>
    <ligand>
        <name>substrate</name>
    </ligand>
</feature>
<feature type="binding site" evidence="1">
    <location>
        <position position="144"/>
    </location>
    <ligand>
        <name>substrate</name>
    </ligand>
</feature>
<feature type="binding site" evidence="1">
    <location>
        <position position="193"/>
    </location>
    <ligand>
        <name>substrate</name>
    </ligand>
</feature>
<feature type="binding site" evidence="1">
    <location>
        <position position="220"/>
    </location>
    <ligand>
        <name>substrate</name>
    </ligand>
</feature>
<feature type="binding site" evidence="1">
    <location>
        <position position="308"/>
    </location>
    <ligand>
        <name>Zn(2+)</name>
        <dbReference type="ChEBI" id="CHEBI:29105"/>
    </ligand>
</feature>
<feature type="binding site" evidence="1">
    <location>
        <position position="310"/>
    </location>
    <ligand>
        <name>Zn(2+)</name>
        <dbReference type="ChEBI" id="CHEBI:29105"/>
    </ligand>
</feature>
<feature type="binding site" evidence="1">
    <location>
        <position position="313"/>
    </location>
    <ligand>
        <name>Zn(2+)</name>
        <dbReference type="ChEBI" id="CHEBI:29105"/>
    </ligand>
</feature>
<feature type="binding site" evidence="1">
    <location>
        <position position="339"/>
    </location>
    <ligand>
        <name>Zn(2+)</name>
        <dbReference type="ChEBI" id="CHEBI:29105"/>
    </ligand>
</feature>
<gene>
    <name evidence="1" type="primary">tgt</name>
    <name type="ordered locus">Suden_0907</name>
</gene>
<evidence type="ECO:0000255" key="1">
    <source>
        <dbReference type="HAMAP-Rule" id="MF_00168"/>
    </source>
</evidence>